<reference key="1">
    <citation type="journal article" date="2007" name="PLoS ONE">
        <title>A glimpse of streptococcal toxic shock syndrome from comparative genomics of S. suis 2 Chinese isolates.</title>
        <authorList>
            <person name="Chen C."/>
            <person name="Tang J."/>
            <person name="Dong W."/>
            <person name="Wang C."/>
            <person name="Feng Y."/>
            <person name="Wang J."/>
            <person name="Zheng F."/>
            <person name="Pan X."/>
            <person name="Liu D."/>
            <person name="Li M."/>
            <person name="Song Y."/>
            <person name="Zhu X."/>
            <person name="Sun H."/>
            <person name="Feng T."/>
            <person name="Guo Z."/>
            <person name="Ju A."/>
            <person name="Ge J."/>
            <person name="Dong Y."/>
            <person name="Sun W."/>
            <person name="Jiang Y."/>
            <person name="Wang J."/>
            <person name="Yan J."/>
            <person name="Yang H."/>
            <person name="Wang X."/>
            <person name="Gao G.F."/>
            <person name="Yang R."/>
            <person name="Wang J."/>
            <person name="Yu J."/>
        </authorList>
    </citation>
    <scope>NUCLEOTIDE SEQUENCE [LARGE SCALE GENOMIC DNA]</scope>
    <source>
        <strain>05ZYH33</strain>
    </source>
</reference>
<accession>A4VX07</accession>
<organism>
    <name type="scientific">Streptococcus suis (strain 05ZYH33)</name>
    <dbReference type="NCBI Taxonomy" id="391295"/>
    <lineage>
        <taxon>Bacteria</taxon>
        <taxon>Bacillati</taxon>
        <taxon>Bacillota</taxon>
        <taxon>Bacilli</taxon>
        <taxon>Lactobacillales</taxon>
        <taxon>Streptococcaceae</taxon>
        <taxon>Streptococcus</taxon>
    </lineage>
</organism>
<evidence type="ECO:0000255" key="1">
    <source>
        <dbReference type="HAMAP-Rule" id="MF_00151"/>
    </source>
</evidence>
<comment type="function">
    <text evidence="1">Reversibly transfers an adenylyl group from ATP to 4'-phosphopantetheine, yielding dephospho-CoA (dPCoA) and pyrophosphate.</text>
</comment>
<comment type="catalytic activity">
    <reaction evidence="1">
        <text>(R)-4'-phosphopantetheine + ATP + H(+) = 3'-dephospho-CoA + diphosphate</text>
        <dbReference type="Rhea" id="RHEA:19801"/>
        <dbReference type="ChEBI" id="CHEBI:15378"/>
        <dbReference type="ChEBI" id="CHEBI:30616"/>
        <dbReference type="ChEBI" id="CHEBI:33019"/>
        <dbReference type="ChEBI" id="CHEBI:57328"/>
        <dbReference type="ChEBI" id="CHEBI:61723"/>
        <dbReference type="EC" id="2.7.7.3"/>
    </reaction>
</comment>
<comment type="cofactor">
    <cofactor evidence="1">
        <name>Mg(2+)</name>
        <dbReference type="ChEBI" id="CHEBI:18420"/>
    </cofactor>
</comment>
<comment type="pathway">
    <text evidence="1">Cofactor biosynthesis; coenzyme A biosynthesis; CoA from (R)-pantothenate: step 4/5.</text>
</comment>
<comment type="subunit">
    <text evidence="1">Homohexamer.</text>
</comment>
<comment type="subcellular location">
    <subcellularLocation>
        <location evidence="1">Cytoplasm</location>
    </subcellularLocation>
</comment>
<comment type="similarity">
    <text evidence="1">Belongs to the bacterial CoaD family.</text>
</comment>
<dbReference type="EC" id="2.7.7.3" evidence="1"/>
<dbReference type="EMBL" id="CP000407">
    <property type="protein sequence ID" value="ABP90646.1"/>
    <property type="molecule type" value="Genomic_DNA"/>
</dbReference>
<dbReference type="SMR" id="A4VX07"/>
<dbReference type="STRING" id="391295.SSU05_1680"/>
<dbReference type="KEGG" id="ssu:SSU05_1680"/>
<dbReference type="eggNOG" id="COG0669">
    <property type="taxonomic scope" value="Bacteria"/>
</dbReference>
<dbReference type="HOGENOM" id="CLU_100149_0_1_9"/>
<dbReference type="UniPathway" id="UPA00241">
    <property type="reaction ID" value="UER00355"/>
</dbReference>
<dbReference type="GO" id="GO:0005737">
    <property type="term" value="C:cytoplasm"/>
    <property type="evidence" value="ECO:0007669"/>
    <property type="project" value="UniProtKB-SubCell"/>
</dbReference>
<dbReference type="GO" id="GO:0005524">
    <property type="term" value="F:ATP binding"/>
    <property type="evidence" value="ECO:0007669"/>
    <property type="project" value="UniProtKB-KW"/>
</dbReference>
<dbReference type="GO" id="GO:0004595">
    <property type="term" value="F:pantetheine-phosphate adenylyltransferase activity"/>
    <property type="evidence" value="ECO:0007669"/>
    <property type="project" value="UniProtKB-UniRule"/>
</dbReference>
<dbReference type="GO" id="GO:0015937">
    <property type="term" value="P:coenzyme A biosynthetic process"/>
    <property type="evidence" value="ECO:0007669"/>
    <property type="project" value="UniProtKB-UniRule"/>
</dbReference>
<dbReference type="CDD" id="cd02163">
    <property type="entry name" value="PPAT"/>
    <property type="match status" value="1"/>
</dbReference>
<dbReference type="Gene3D" id="3.40.50.620">
    <property type="entry name" value="HUPs"/>
    <property type="match status" value="1"/>
</dbReference>
<dbReference type="HAMAP" id="MF_00151">
    <property type="entry name" value="PPAT_bact"/>
    <property type="match status" value="1"/>
</dbReference>
<dbReference type="InterPro" id="IPR004821">
    <property type="entry name" value="Cyt_trans-like"/>
</dbReference>
<dbReference type="InterPro" id="IPR001980">
    <property type="entry name" value="PPAT"/>
</dbReference>
<dbReference type="InterPro" id="IPR014729">
    <property type="entry name" value="Rossmann-like_a/b/a_fold"/>
</dbReference>
<dbReference type="NCBIfam" id="TIGR01510">
    <property type="entry name" value="coaD_prev_kdtB"/>
    <property type="match status" value="1"/>
</dbReference>
<dbReference type="NCBIfam" id="TIGR00125">
    <property type="entry name" value="cyt_tran_rel"/>
    <property type="match status" value="1"/>
</dbReference>
<dbReference type="PANTHER" id="PTHR21342">
    <property type="entry name" value="PHOSPHOPANTETHEINE ADENYLYLTRANSFERASE"/>
    <property type="match status" value="1"/>
</dbReference>
<dbReference type="PANTHER" id="PTHR21342:SF1">
    <property type="entry name" value="PHOSPHOPANTETHEINE ADENYLYLTRANSFERASE"/>
    <property type="match status" value="1"/>
</dbReference>
<dbReference type="Pfam" id="PF01467">
    <property type="entry name" value="CTP_transf_like"/>
    <property type="match status" value="1"/>
</dbReference>
<dbReference type="PRINTS" id="PR01020">
    <property type="entry name" value="LPSBIOSNTHSS"/>
</dbReference>
<dbReference type="SUPFAM" id="SSF52374">
    <property type="entry name" value="Nucleotidylyl transferase"/>
    <property type="match status" value="1"/>
</dbReference>
<protein>
    <recommendedName>
        <fullName evidence="1">Phosphopantetheine adenylyltransferase</fullName>
        <ecNumber evidence="1">2.7.7.3</ecNumber>
    </recommendedName>
    <alternativeName>
        <fullName evidence="1">Dephospho-CoA pyrophosphorylase</fullName>
    </alternativeName>
    <alternativeName>
        <fullName evidence="1">Pantetheine-phosphate adenylyltransferase</fullName>
        <shortName evidence="1">PPAT</shortName>
    </alternativeName>
</protein>
<feature type="chain" id="PRO_1000011259" description="Phosphopantetheine adenylyltransferase">
    <location>
        <begin position="1"/>
        <end position="162"/>
    </location>
</feature>
<feature type="binding site" evidence="1">
    <location>
        <begin position="11"/>
        <end position="12"/>
    </location>
    <ligand>
        <name>ATP</name>
        <dbReference type="ChEBI" id="CHEBI:30616"/>
    </ligand>
</feature>
<feature type="binding site" evidence="1">
    <location>
        <position position="11"/>
    </location>
    <ligand>
        <name>substrate</name>
    </ligand>
</feature>
<feature type="binding site" evidence="1">
    <location>
        <position position="19"/>
    </location>
    <ligand>
        <name>ATP</name>
        <dbReference type="ChEBI" id="CHEBI:30616"/>
    </ligand>
</feature>
<feature type="binding site" evidence="1">
    <location>
        <position position="43"/>
    </location>
    <ligand>
        <name>substrate</name>
    </ligand>
</feature>
<feature type="binding site" evidence="1">
    <location>
        <position position="76"/>
    </location>
    <ligand>
        <name>substrate</name>
    </ligand>
</feature>
<feature type="binding site" evidence="1">
    <location>
        <position position="90"/>
    </location>
    <ligand>
        <name>substrate</name>
    </ligand>
</feature>
<feature type="binding site" evidence="1">
    <location>
        <begin position="91"/>
        <end position="93"/>
    </location>
    <ligand>
        <name>ATP</name>
        <dbReference type="ChEBI" id="CHEBI:30616"/>
    </ligand>
</feature>
<feature type="binding site" evidence="1">
    <location>
        <position position="101"/>
    </location>
    <ligand>
        <name>ATP</name>
        <dbReference type="ChEBI" id="CHEBI:30616"/>
    </ligand>
</feature>
<feature type="binding site" evidence="1">
    <location>
        <begin position="126"/>
        <end position="132"/>
    </location>
    <ligand>
        <name>ATP</name>
        <dbReference type="ChEBI" id="CHEBI:30616"/>
    </ligand>
</feature>
<feature type="site" description="Transition state stabilizer" evidence="1">
    <location>
        <position position="19"/>
    </location>
</feature>
<keyword id="KW-0067">ATP-binding</keyword>
<keyword id="KW-0173">Coenzyme A biosynthesis</keyword>
<keyword id="KW-0963">Cytoplasm</keyword>
<keyword id="KW-0460">Magnesium</keyword>
<keyword id="KW-0547">Nucleotide-binding</keyword>
<keyword id="KW-0548">Nucleotidyltransferase</keyword>
<keyword id="KW-0808">Transferase</keyword>
<gene>
    <name evidence="1" type="primary">coaD</name>
    <name type="ordered locus">SSU05_1680</name>
</gene>
<proteinExistence type="inferred from homology"/>
<name>COAD_STRSY</name>
<sequence>MSDKIGLFTGSFDPITNGHLDLIERASGLFDKLYVGVFTNPKKAGLLTGLERKAILEKLFVGMENIEVVLSENELVVDVAKRYGVTHLVRGLRNATDLEYESSFDFYNRQLAPGLETIYLIAKPELKFVSSSQVRELLYFKQDIGPYVPEIVSEEIRKNEEK</sequence>